<accession>P21708</accession>
<accession>Q4PIY8</accession>
<accession>Q62686</accession>
<accession>Q9JJ13</accession>
<feature type="initiator methionine" description="Removed" evidence="10">
    <location>
        <position position="1"/>
    </location>
</feature>
<feature type="chain" id="PRO_0000186253" description="Mitogen-activated protein kinase 3">
    <location>
        <begin position="2"/>
        <end position="380"/>
    </location>
</feature>
<feature type="domain" description="Protein kinase" evidence="4">
    <location>
        <begin position="43"/>
        <end position="331"/>
    </location>
</feature>
<feature type="short sequence motif" description="TXY">
    <location>
        <begin position="203"/>
        <end position="205"/>
    </location>
</feature>
<feature type="active site" description="Proton acceptor" evidence="4 5">
    <location>
        <position position="167"/>
    </location>
</feature>
<feature type="binding site" evidence="4">
    <location>
        <begin position="49"/>
        <end position="57"/>
    </location>
    <ligand>
        <name>ATP</name>
        <dbReference type="ChEBI" id="CHEBI:30616"/>
    </ligand>
</feature>
<feature type="binding site" evidence="4">
    <location>
        <position position="72"/>
    </location>
    <ligand>
        <name>ATP</name>
        <dbReference type="ChEBI" id="CHEBI:30616"/>
    </ligand>
</feature>
<feature type="modified residue" description="N-acetylalanine" evidence="10">
    <location>
        <position position="2"/>
    </location>
</feature>
<feature type="modified residue" description="Phosphothreonine" evidence="2">
    <location>
        <position position="199"/>
    </location>
</feature>
<feature type="modified residue" description="Phosphothreonine; by MAP2K1 and MAP2K2" evidence="10 14 15">
    <location>
        <position position="203"/>
    </location>
</feature>
<feature type="modified residue" description="Phosphotyrosine; by MAP2K1 and MAP2K2" evidence="10 14 15">
    <location>
        <position position="205"/>
    </location>
</feature>
<feature type="modified residue" description="Phosphothreonine; by autocatalysis" evidence="2">
    <location>
        <position position="208"/>
    </location>
</feature>
<feature type="splice variant" id="VSP_004830" description="In isoform 2." evidence="10">
    <original>E</original>
    <variation>EVSRPPAAGRGISVPSVRPVPYCLCPQ</variation>
    <location>
        <position position="340"/>
    </location>
</feature>
<feature type="sequence conflict" description="In Ref. 1; AAA11604/CAA46318, 3; AAA63486 and 6; AAA20009." evidence="11" ref="1 3 6">
    <original>R</original>
    <variation>G</variation>
    <location>
        <position position="95"/>
    </location>
</feature>
<organism>
    <name type="scientific">Rattus norvegicus</name>
    <name type="common">Rat</name>
    <dbReference type="NCBI Taxonomy" id="10116"/>
    <lineage>
        <taxon>Eukaryota</taxon>
        <taxon>Metazoa</taxon>
        <taxon>Chordata</taxon>
        <taxon>Craniata</taxon>
        <taxon>Vertebrata</taxon>
        <taxon>Euteleostomi</taxon>
        <taxon>Mammalia</taxon>
        <taxon>Eutheria</taxon>
        <taxon>Euarchontoglires</taxon>
        <taxon>Glires</taxon>
        <taxon>Rodentia</taxon>
        <taxon>Myomorpha</taxon>
        <taxon>Muroidea</taxon>
        <taxon>Muridae</taxon>
        <taxon>Murinae</taxon>
        <taxon>Rattus</taxon>
    </lineage>
</organism>
<gene>
    <name type="primary">Mapk3</name>
    <name type="synonym">Erk1</name>
    <name type="synonym">Prkm3</name>
</gene>
<reference key="1">
    <citation type="journal article" date="1992" name="Gene">
        <title>Sequence of a rat cDNA encoding the ERK1-MAP kinase.</title>
        <authorList>
            <person name="Marquardt B."/>
            <person name="Stabel S."/>
        </authorList>
    </citation>
    <scope>NUCLEOTIDE SEQUENCE [MRNA] (ISOFORM 1)</scope>
    <source>
        <strain>Sprague-Dawley</strain>
        <tissue>Brain</tissue>
    </source>
</reference>
<reference key="2">
    <citation type="submission" date="2006-08" db="UniProtKB">
        <authorList>
            <person name="Bienvenut W.V."/>
            <person name="von Kriegsheim A.F."/>
            <person name="Kolch W."/>
        </authorList>
    </citation>
    <scope>PROTEIN SEQUENCE OF 2-65; 96-132; 157-209; 213-221; 280-357 AND 361-380 (ISOFORM 2)</scope>
    <scope>CLEAVAGE OF INITIATOR METHIONINE</scope>
    <scope>ACETYLATION AT ALA-2</scope>
    <scope>PHOSPHORYLATION AT THR-203 AND TYR-205</scope>
    <scope>IDENTIFICATION BY MASS SPECTROMETRY</scope>
    <source>
        <tissue>Pheochromocytoma</tissue>
    </source>
</reference>
<reference key="3">
    <citation type="submission" date="1991-07" db="EMBL/GenBank/DDBJ databases">
        <authorList>
            <person name="Maisonpierre P.C."/>
            <person name="le Beau M.M."/>
            <person name="Espinosa R. III"/>
            <person name="Ip N.Y."/>
            <person name="Belluscio L."/>
            <person name="la Monte S.M."/>
            <person name="Squinto S."/>
            <person name="Furth M.E."/>
            <person name="Yancopoulos G.D."/>
        </authorList>
    </citation>
    <scope>NUCLEOTIDE SEQUENCE [MRNA] OF 7-380 (ISOFORM 1)</scope>
</reference>
<reference key="4">
    <citation type="submission" date="2007-07" db="UniProtKB">
        <authorList>
            <person name="Lubec G."/>
            <person name="Afjehi-Sadat L."/>
            <person name="Kang S.U."/>
        </authorList>
    </citation>
    <scope>PROTEIN SEQUENCE OF 73-84 AND 183-190</scope>
    <scope>IDENTIFICATION BY MASS SPECTROMETRY</scope>
    <source>
        <strain>Sprague-Dawley</strain>
        <tissue>Brain</tissue>
        <tissue>Spinal cord</tissue>
    </source>
</reference>
<reference key="5">
    <citation type="journal article" date="1990" name="Science">
        <title>An insulin-stimulated protein kinase similar to yeast kinases involved in cell cycle control.</title>
        <authorList>
            <person name="Boulton T.G."/>
            <person name="Yancopoulos G.D."/>
            <person name="Gregory J.S."/>
            <person name="Slaughter C."/>
            <person name="Moomaw C."/>
            <person name="Hsu J."/>
            <person name="Cobb M.H."/>
        </authorList>
    </citation>
    <scope>NUCLEOTIDE SEQUENCE [MRNA] OF 14-380 (ISOFORM 1)</scope>
    <scope>PARTIAL PROTEIN SEQUENCE</scope>
    <scope>TISSUE SPECIFICITY</scope>
</reference>
<reference key="6">
    <citation type="journal article" date="1991" name="DNA Cell Biol.">
        <title>Molecular analysis of microtubule-associated protein-2 kinase cDNA from mouse and rat brain.</title>
        <authorList>
            <person name="de Miguel C."/>
            <person name="Kligman D."/>
            <person name="Patel J."/>
            <person name="Detera-Wadleigh S.D."/>
        </authorList>
    </citation>
    <scope>NUCLEOTIDE SEQUENCE [MRNA] OF 14-380 (ISOFORM 1)</scope>
    <source>
        <tissue>Brain cortex</tissue>
    </source>
</reference>
<reference key="7">
    <citation type="journal article" date="1991" name="Biochemistry">
        <title>Purification and properties of extracellular signal-regulated kinase 1, an insulin-stimulated microtubule-associated protein 2 kinase.</title>
        <authorList>
            <person name="Boulton T.G."/>
            <person name="Gregory J.S."/>
            <person name="Cobb M.H."/>
        </authorList>
    </citation>
    <scope>PROTEIN SEQUENCE OF 43-64 AND 167-185</scope>
    <scope>CHARACTERIZATION</scope>
</reference>
<reference key="8">
    <citation type="journal article" date="2000" name="J. Biol. Chem.">
        <title>ERK1b, a 46-kDa ERK isoform that is differentially regulated by MEK.</title>
        <authorList>
            <person name="Yung Y."/>
            <person name="Yao Z."/>
            <person name="Hanoch T."/>
            <person name="Seger R."/>
        </authorList>
    </citation>
    <scope>RETRACTED PAPER</scope>
</reference>
<reference key="9">
    <citation type="journal article" date="2005" name="J. Biol. Chem.">
        <title>GIT1 is a scaffold for ERK1/2 activation in focal adhesions.</title>
        <authorList>
            <person name="Yin G."/>
            <person name="Zheng Q."/>
            <person name="Yan C."/>
            <person name="Berk B.C."/>
        </authorList>
    </citation>
    <scope>INTERACTION WITH GIT1</scope>
</reference>
<reference key="10">
    <citation type="journal article" date="2017" name="J. Biol. Chem.">
        <authorList>
            <person name="Yung Y."/>
            <person name="Yao Z."/>
            <person name="Hanoch T."/>
            <person name="Seger R."/>
        </authorList>
    </citation>
    <scope>RETRACTION NOTICE OF PUBMED:10748187</scope>
</reference>
<reference key="11">
    <citation type="journal article" date="1991" name="Proc. Natl. Acad. Sci. U.S.A.">
        <title>Microtubule-associated protein 2 kinases, ERK1 and ERK2, undergo autophosphorylation on both tyrosine and threonine residues: implications for their mechanism of activation.</title>
        <authorList>
            <person name="Seger R."/>
            <person name="Ahn N.G."/>
            <person name="Boulton T.G."/>
            <person name="Yancopoulos G.D."/>
            <person name="Panayotatos N."/>
            <person name="Radziejewska E."/>
            <person name="Ericsson L."/>
            <person name="Bratlien R.L."/>
            <person name="Cobb M.H."/>
            <person name="Krebs E.G."/>
        </authorList>
    </citation>
    <scope>AUTOPHOSPHORYLATION</scope>
</reference>
<reference key="12">
    <citation type="journal article" date="1994" name="Science">
        <title>PHAS-I as a link between mitogen-activated protein kinase and translation initiation.</title>
        <authorList>
            <person name="Lin T.-A."/>
            <person name="Kong X."/>
            <person name="Haystead T.A.J."/>
            <person name="Pause A."/>
            <person name="Belsham G.J."/>
            <person name="Sonenberg N."/>
            <person name="Lawrence J.C. Jr."/>
        </authorList>
    </citation>
    <scope>PHOSPHORYLATION OF EIF4EBP1</scope>
</reference>
<reference key="13">
    <citation type="journal article" date="2006" name="Proc. Natl. Acad. Sci. U.S.A.">
        <title>Quantitative phosphoproteomics of vasopressin-sensitive renal cells: regulation of aquaporin-2 phosphorylation at two sites.</title>
        <authorList>
            <person name="Hoffert J.D."/>
            <person name="Pisitkun T."/>
            <person name="Wang G."/>
            <person name="Shen R.-F."/>
            <person name="Knepper M.A."/>
        </authorList>
    </citation>
    <scope>PHOSPHORYLATION [LARGE SCALE ANALYSIS] AT THR-203 AND TYR-205</scope>
    <scope>IDENTIFICATION BY MASS SPECTROMETRY [LARGE SCALE ANALYSIS]</scope>
</reference>
<reference key="14">
    <citation type="journal article" date="2009" name="PLoS ONE">
        <title>Regulator of G-protein signaling 14 (RGS14) is a selective H-Ras effector.</title>
        <authorList>
            <person name="Willard F.S."/>
            <person name="Willard M.D."/>
            <person name="Kimple A.J."/>
            <person name="Soundararajan M."/>
            <person name="Oestreich E.A."/>
            <person name="Li X."/>
            <person name="Sowa N.A."/>
            <person name="Kimple R.J."/>
            <person name="Doyle D.A."/>
            <person name="Der C.J."/>
            <person name="Zylka M.J."/>
            <person name="Snider W.D."/>
            <person name="Siderovski D.P."/>
        </authorList>
    </citation>
    <scope>IDENTIFICATION IN A COMPLEX WITH BRAF; HRAS; MAP2K1 AND RGS14</scope>
</reference>
<reference key="15">
    <citation type="journal article" date="2006" name="Growth Factors">
        <title>The extracellular signal-regulated kinase: multiple substrates regulate diverse cellular functions.</title>
        <authorList>
            <person name="Yoon S."/>
            <person name="Seger R."/>
        </authorList>
    </citation>
    <scope>REVIEW ON FUNCTION</scope>
</reference>
<reference key="16">
    <citation type="journal article" date="2009" name="BioFactors">
        <title>The ERK signaling cascade--views from different subcellular compartments.</title>
        <authorList>
            <person name="Yao Z."/>
            <person name="Seger R."/>
        </authorList>
    </citation>
    <scope>REVIEW ON FUNCTION</scope>
    <scope>REVIEW ON SUBCELLULAR LOCATION</scope>
</reference>
<reference key="17">
    <citation type="journal article" date="2011" name="Genes Cancer">
        <title>The ERK cascade: distinct functions within various subcellular organelles.</title>
        <authorList>
            <person name="Wortzel I."/>
            <person name="Seger R."/>
        </authorList>
    </citation>
    <scope>REVIEW ON ACTIVITY REGULATION</scope>
    <scope>REVIEW ON FUNCTION</scope>
</reference>
<reference key="18">
    <citation type="journal article" date="2012" name="Nat. Commun.">
        <title>Quantitative maps of protein phosphorylation sites across 14 different rat organs and tissues.</title>
        <authorList>
            <person name="Lundby A."/>
            <person name="Secher A."/>
            <person name="Lage K."/>
            <person name="Nordsborg N.B."/>
            <person name="Dmytriyev A."/>
            <person name="Lundby C."/>
            <person name="Olsen J.V."/>
        </authorList>
    </citation>
    <scope>PHOSPHORYLATION [LARGE SCALE ANALYSIS] AT THR-203 AND TYR-205</scope>
    <scope>IDENTIFICATION BY MASS SPECTROMETRY [LARGE SCALE ANALYSIS]</scope>
</reference>
<reference key="19">
    <citation type="journal article" date="2014" name="Proc. Natl. Acad. Sci. U.S.A.">
        <title>MURC/Cavin-4 facilitates recruitment of ERK to caveolae and concentric cardiac hypertrophy induced by alpha1-adrenergic receptors.</title>
        <authorList>
            <person name="Ogata T."/>
            <person name="Naito D."/>
            <person name="Nakanishi N."/>
            <person name="Hayashi Y.K."/>
            <person name="Taniguchi T."/>
            <person name="Miyagawa K."/>
            <person name="Hamaoka T."/>
            <person name="Maruyama N."/>
            <person name="Matoba S."/>
            <person name="Ikeda K."/>
            <person name="Yamada H."/>
            <person name="Oh H."/>
            <person name="Ueyama T."/>
        </authorList>
    </citation>
    <scope>SUBCELLULAR LOCATION</scope>
    <scope>INTERACTION WITH CAVIN4</scope>
</reference>
<keyword id="KW-0007">Acetylation</keyword>
<keyword id="KW-0025">Alternative splicing</keyword>
<keyword id="KW-0053">Apoptosis</keyword>
<keyword id="KW-0067">ATP-binding</keyword>
<keyword id="KW-0131">Cell cycle</keyword>
<keyword id="KW-0965">Cell junction</keyword>
<keyword id="KW-0963">Cytoplasm</keyword>
<keyword id="KW-0903">Direct protein sequencing</keyword>
<keyword id="KW-0418">Kinase</keyword>
<keyword id="KW-0472">Membrane</keyword>
<keyword id="KW-0547">Nucleotide-binding</keyword>
<keyword id="KW-0539">Nucleus</keyword>
<keyword id="KW-0597">Phosphoprotein</keyword>
<keyword id="KW-1185">Reference proteome</keyword>
<keyword id="KW-0723">Serine/threonine-protein kinase</keyword>
<keyword id="KW-0808">Transferase</keyword>
<keyword id="KW-0832">Ubl conjugation</keyword>
<sequence length="380" mass="43081">MAAAAAAPGGGGGEPRGTAGVVPVVPGEVEVVKGQPFDVGPRYTQLQYIGEGAYGMVSSAYDHVRKTRVAIKKISPFEHQTYCQRTLREIQILLRFRHENVIGIRDILRAPTLEAMRDVYIVQDLMETDLYKLLKSQQLSNDHICYFLYQILRGLKYIHSANVLHRDLKPSNLLINTTCDLKICDFGLARIADPEHDHTGFLTEYVATRWYRAPEIMLNSKGYTKSIDIWSVGCILAEMLSNRPIFPGKHYLDQLNHILGILGSPSQEDLNCIINMKARNYLQSLPSKTKVAWAKLFPKSDSKALDLLDRMLTFNPNKRITVEEALAHPYLEQYYDPTDEPVAEEPFTFDMELDDLPKERLKELIFQETARFQPGAPEAP</sequence>
<dbReference type="EC" id="2.7.11.24"/>
<dbReference type="EMBL" id="S46779">
    <property type="protein sequence ID" value="AAA11604.1"/>
    <property type="molecule type" value="mRNA"/>
</dbReference>
<dbReference type="EMBL" id="X65198">
    <property type="protein sequence ID" value="CAA46318.1"/>
    <property type="molecule type" value="mRNA"/>
</dbReference>
<dbReference type="EMBL" id="AF155236">
    <property type="protein sequence ID" value="AAF71666.1"/>
    <property type="molecule type" value="mRNA"/>
</dbReference>
<dbReference type="EMBL" id="M61177">
    <property type="protein sequence ID" value="AAA63486.1"/>
    <property type="molecule type" value="mRNA"/>
</dbReference>
<dbReference type="EMBL" id="M38194">
    <property type="protein sequence ID" value="AAA41123.1"/>
    <property type="molecule type" value="mRNA"/>
</dbReference>
<dbReference type="EMBL" id="U12008">
    <property type="protein sequence ID" value="AAA20009.1"/>
    <property type="molecule type" value="mRNA"/>
</dbReference>
<dbReference type="PIR" id="JC1451">
    <property type="entry name" value="JC1451"/>
</dbReference>
<dbReference type="RefSeq" id="NP_059043.2">
    <molecule id="P21708-1"/>
    <property type="nucleotide sequence ID" value="NM_017347.3"/>
</dbReference>
<dbReference type="RefSeq" id="XP_038944453.1">
    <molecule id="P21708-2"/>
    <property type="nucleotide sequence ID" value="XM_039088525.2"/>
</dbReference>
<dbReference type="SMR" id="P21708"/>
<dbReference type="BioGRID" id="248427">
    <property type="interactions" value="5"/>
</dbReference>
<dbReference type="CORUM" id="P21708"/>
<dbReference type="DIP" id="DIP-487N"/>
<dbReference type="FunCoup" id="P21708">
    <property type="interactions" value="2591"/>
</dbReference>
<dbReference type="IntAct" id="P21708">
    <property type="interactions" value="273"/>
</dbReference>
<dbReference type="MINT" id="P21708"/>
<dbReference type="STRING" id="10116.ENSRNOP00000070784"/>
<dbReference type="ChEMBL" id="CHEMBL5809"/>
<dbReference type="GlyGen" id="P21708">
    <property type="glycosylation" value="1 site, 1 O-linked glycan (1 site)"/>
</dbReference>
<dbReference type="iPTMnet" id="P21708"/>
<dbReference type="PhosphoSitePlus" id="P21708"/>
<dbReference type="SwissPalm" id="P21708"/>
<dbReference type="jPOST" id="P21708"/>
<dbReference type="PaxDb" id="10116-ENSRNOP00000026627"/>
<dbReference type="GeneID" id="50689"/>
<dbReference type="KEGG" id="rno:50689"/>
<dbReference type="UCSC" id="RGD:3046">
    <molecule id="P21708-1"/>
    <property type="organism name" value="rat"/>
</dbReference>
<dbReference type="AGR" id="RGD:3046"/>
<dbReference type="CTD" id="5595"/>
<dbReference type="RGD" id="3046">
    <property type="gene designation" value="Mapk3"/>
</dbReference>
<dbReference type="VEuPathDB" id="HostDB:ENSRNOG00000053583"/>
<dbReference type="eggNOG" id="KOG0660">
    <property type="taxonomic scope" value="Eukaryota"/>
</dbReference>
<dbReference type="HOGENOM" id="CLU_000288_181_1_1"/>
<dbReference type="InParanoid" id="P21708"/>
<dbReference type="OrthoDB" id="192887at2759"/>
<dbReference type="PhylomeDB" id="P21708"/>
<dbReference type="TreeFam" id="TF105097"/>
<dbReference type="BRENDA" id="2.7.11.24">
    <property type="organism ID" value="5301"/>
</dbReference>
<dbReference type="Reactome" id="R-RNO-110056">
    <property type="pathway name" value="MAPK3 (ERK1) activation"/>
</dbReference>
<dbReference type="Reactome" id="R-RNO-112409">
    <property type="pathway name" value="RAF-independent MAPK1/3 activation"/>
</dbReference>
<dbReference type="Reactome" id="R-RNO-1169408">
    <property type="pathway name" value="ISG15 antiviral mechanism"/>
</dbReference>
<dbReference type="Reactome" id="R-RNO-1181150">
    <property type="pathway name" value="Signaling by NODAL"/>
</dbReference>
<dbReference type="Reactome" id="R-RNO-1295596">
    <property type="pathway name" value="Spry regulation of FGF signaling"/>
</dbReference>
<dbReference type="Reactome" id="R-RNO-1502540">
    <property type="pathway name" value="Signaling by Activin"/>
</dbReference>
<dbReference type="Reactome" id="R-RNO-162658">
    <property type="pathway name" value="Golgi Cisternae Pericentriolar Stack Reorganization"/>
</dbReference>
<dbReference type="Reactome" id="R-RNO-170968">
    <property type="pathway name" value="Frs2-mediated activation"/>
</dbReference>
<dbReference type="Reactome" id="R-RNO-198753">
    <property type="pathway name" value="ERK/MAPK targets"/>
</dbReference>
<dbReference type="Reactome" id="R-RNO-202670">
    <property type="pathway name" value="ERKs are inactivated"/>
</dbReference>
<dbReference type="Reactome" id="R-RNO-2029482">
    <property type="pathway name" value="Regulation of actin dynamics for phagocytic cup formation"/>
</dbReference>
<dbReference type="Reactome" id="R-RNO-2173795">
    <property type="pathway name" value="Downregulation of SMAD2/3:SMAD4 transcriptional activity"/>
</dbReference>
<dbReference type="Reactome" id="R-RNO-2173796">
    <property type="pathway name" value="SMAD2/SMAD3:SMAD4 heterotrimer regulates transcription"/>
</dbReference>
<dbReference type="Reactome" id="R-RNO-2559580">
    <property type="pathway name" value="Oxidative Stress Induced Senescence"/>
</dbReference>
<dbReference type="Reactome" id="R-RNO-2559582">
    <property type="pathway name" value="Senescence-Associated Secretory Phenotype (SASP)"/>
</dbReference>
<dbReference type="Reactome" id="R-RNO-2559585">
    <property type="pathway name" value="Oncogene Induced Senescence"/>
</dbReference>
<dbReference type="Reactome" id="R-RNO-2871796">
    <property type="pathway name" value="FCERI mediated MAPK activation"/>
</dbReference>
<dbReference type="Reactome" id="R-RNO-3371453">
    <property type="pathway name" value="Regulation of HSF1-mediated heat shock response"/>
</dbReference>
<dbReference type="Reactome" id="R-RNO-375165">
    <property type="pathway name" value="NCAM signaling for neurite out-growth"/>
</dbReference>
<dbReference type="Reactome" id="R-RNO-445144">
    <property type="pathway name" value="Signal transduction by L1"/>
</dbReference>
<dbReference type="Reactome" id="R-RNO-450341">
    <property type="pathway name" value="Activation of the AP-1 family of transcription factors"/>
</dbReference>
<dbReference type="Reactome" id="R-RNO-456926">
    <property type="pathway name" value="Thrombin signalling through proteinase activated receptors (PARs)"/>
</dbReference>
<dbReference type="Reactome" id="R-RNO-5654726">
    <property type="pathway name" value="Negative regulation of FGFR1 signaling"/>
</dbReference>
<dbReference type="Reactome" id="R-RNO-5654727">
    <property type="pathway name" value="Negative regulation of FGFR2 signaling"/>
</dbReference>
<dbReference type="Reactome" id="R-RNO-5654732">
    <property type="pathway name" value="Negative regulation of FGFR3 signaling"/>
</dbReference>
<dbReference type="Reactome" id="R-RNO-5654733">
    <property type="pathway name" value="Negative regulation of FGFR4 signaling"/>
</dbReference>
<dbReference type="Reactome" id="R-RNO-5663213">
    <property type="pathway name" value="RHO GTPases Activate WASPs and WAVEs"/>
</dbReference>
<dbReference type="Reactome" id="R-RNO-5668599">
    <property type="pathway name" value="RHO GTPases Activate NADPH Oxidases"/>
</dbReference>
<dbReference type="Reactome" id="R-RNO-5673001">
    <property type="pathway name" value="RAF/MAP kinase cascade"/>
</dbReference>
<dbReference type="Reactome" id="R-RNO-5674135">
    <property type="pathway name" value="MAP2K and MAPK activation"/>
</dbReference>
<dbReference type="Reactome" id="R-RNO-5674499">
    <property type="pathway name" value="Negative feedback regulation of MAPK pathway"/>
</dbReference>
<dbReference type="Reactome" id="R-RNO-5675221">
    <property type="pathway name" value="Negative regulation of MAPK pathway"/>
</dbReference>
<dbReference type="Reactome" id="R-RNO-6811558">
    <property type="pathway name" value="PI5P, PP2A and IER3 Regulate PI3K/AKT Signaling"/>
</dbReference>
<dbReference type="Reactome" id="R-RNO-73728">
    <property type="pathway name" value="RNA Polymerase I Promoter Opening"/>
</dbReference>
<dbReference type="Reactome" id="R-RNO-74749">
    <property type="pathway name" value="Signal attenuation"/>
</dbReference>
<dbReference type="Reactome" id="R-RNO-877300">
    <property type="pathway name" value="Interferon gamma signaling"/>
</dbReference>
<dbReference type="Reactome" id="R-RNO-881907">
    <property type="pathway name" value="Gastrin-CREB signalling pathway via PKC and MAPK"/>
</dbReference>
<dbReference type="Reactome" id="R-RNO-9627069">
    <property type="pathway name" value="Regulation of the apoptosome activity"/>
</dbReference>
<dbReference type="Reactome" id="R-RNO-9732724">
    <property type="pathway name" value="IFNG signaling activates MAPKs"/>
</dbReference>
<dbReference type="Reactome" id="R-RNO-982772">
    <property type="pathway name" value="Growth hormone receptor signaling"/>
</dbReference>
<dbReference type="Reactome" id="R-RNO-9856649">
    <property type="pathway name" value="Transcriptional and post-translational regulation of MITF-M expression and activity"/>
</dbReference>
<dbReference type="PRO" id="PR:P21708"/>
<dbReference type="Proteomes" id="UP000002494">
    <property type="component" value="Chromosome 1"/>
</dbReference>
<dbReference type="Bgee" id="ENSRNOG00000053583">
    <property type="expression patterns" value="Expressed in jejunum and 19 other cell types or tissues"/>
</dbReference>
<dbReference type="GO" id="GO:0005901">
    <property type="term" value="C:caveola"/>
    <property type="evidence" value="ECO:0000314"/>
    <property type="project" value="UniProtKB"/>
</dbReference>
<dbReference type="GO" id="GO:0005737">
    <property type="term" value="C:cytoplasm"/>
    <property type="evidence" value="ECO:0000314"/>
    <property type="project" value="UniProtKB"/>
</dbReference>
<dbReference type="GO" id="GO:0005856">
    <property type="term" value="C:cytoskeleton"/>
    <property type="evidence" value="ECO:0000304"/>
    <property type="project" value="UniProtKB"/>
</dbReference>
<dbReference type="GO" id="GO:0005829">
    <property type="term" value="C:cytosol"/>
    <property type="evidence" value="ECO:0000266"/>
    <property type="project" value="RGD"/>
</dbReference>
<dbReference type="GO" id="GO:0005769">
    <property type="term" value="C:early endosome"/>
    <property type="evidence" value="ECO:0000304"/>
    <property type="project" value="UniProtKB"/>
</dbReference>
<dbReference type="GO" id="GO:0005925">
    <property type="term" value="C:focal adhesion"/>
    <property type="evidence" value="ECO:0000304"/>
    <property type="project" value="UniProtKB"/>
</dbReference>
<dbReference type="GO" id="GO:0098978">
    <property type="term" value="C:glutamatergic synapse"/>
    <property type="evidence" value="ECO:0000266"/>
    <property type="project" value="RGD"/>
</dbReference>
<dbReference type="GO" id="GO:0005794">
    <property type="term" value="C:Golgi apparatus"/>
    <property type="evidence" value="ECO:0000304"/>
    <property type="project" value="UniProtKB"/>
</dbReference>
<dbReference type="GO" id="GO:0005770">
    <property type="term" value="C:late endosome"/>
    <property type="evidence" value="ECO:0000304"/>
    <property type="project" value="UniProtKB"/>
</dbReference>
<dbReference type="GO" id="GO:0005739">
    <property type="term" value="C:mitochondrion"/>
    <property type="evidence" value="ECO:0000304"/>
    <property type="project" value="UniProtKB"/>
</dbReference>
<dbReference type="GO" id="GO:0005635">
    <property type="term" value="C:nuclear envelope"/>
    <property type="evidence" value="ECO:0000266"/>
    <property type="project" value="RGD"/>
</dbReference>
<dbReference type="GO" id="GO:0005654">
    <property type="term" value="C:nucleoplasm"/>
    <property type="evidence" value="ECO:0000314"/>
    <property type="project" value="UniProtKB"/>
</dbReference>
<dbReference type="GO" id="GO:0005634">
    <property type="term" value="C:nucleus"/>
    <property type="evidence" value="ECO:0000266"/>
    <property type="project" value="RGD"/>
</dbReference>
<dbReference type="GO" id="GO:0005886">
    <property type="term" value="C:plasma membrane"/>
    <property type="evidence" value="ECO:0000314"/>
    <property type="project" value="UniProtKB"/>
</dbReference>
<dbReference type="GO" id="GO:0032991">
    <property type="term" value="C:protein-containing complex"/>
    <property type="evidence" value="ECO:0000314"/>
    <property type="project" value="RGD"/>
</dbReference>
<dbReference type="GO" id="GO:0031143">
    <property type="term" value="C:pseudopodium"/>
    <property type="evidence" value="ECO:0000266"/>
    <property type="project" value="RGD"/>
</dbReference>
<dbReference type="GO" id="GO:0005524">
    <property type="term" value="F:ATP binding"/>
    <property type="evidence" value="ECO:0000314"/>
    <property type="project" value="RGD"/>
</dbReference>
<dbReference type="GO" id="GO:0140297">
    <property type="term" value="F:DNA-binding transcription factor binding"/>
    <property type="evidence" value="ECO:0000266"/>
    <property type="project" value="RGD"/>
</dbReference>
<dbReference type="GO" id="GO:0042802">
    <property type="term" value="F:identical protein binding"/>
    <property type="evidence" value="ECO:0000266"/>
    <property type="project" value="RGD"/>
</dbReference>
<dbReference type="GO" id="GO:0004707">
    <property type="term" value="F:MAP kinase activity"/>
    <property type="evidence" value="ECO:0000314"/>
    <property type="project" value="UniProtKB"/>
</dbReference>
<dbReference type="GO" id="GO:0019902">
    <property type="term" value="F:phosphatase binding"/>
    <property type="evidence" value="ECO:0000266"/>
    <property type="project" value="RGD"/>
</dbReference>
<dbReference type="GO" id="GO:0001784">
    <property type="term" value="F:phosphotyrosine residue binding"/>
    <property type="evidence" value="ECO:0000266"/>
    <property type="project" value="RGD"/>
</dbReference>
<dbReference type="GO" id="GO:0004672">
    <property type="term" value="F:protein kinase activity"/>
    <property type="evidence" value="ECO:0000266"/>
    <property type="project" value="RGD"/>
</dbReference>
<dbReference type="GO" id="GO:0106310">
    <property type="term" value="F:protein serine kinase activity"/>
    <property type="evidence" value="ECO:0007669"/>
    <property type="project" value="RHEA"/>
</dbReference>
<dbReference type="GO" id="GO:0004674">
    <property type="term" value="F:protein serine/threonine kinase activity"/>
    <property type="evidence" value="ECO:0000266"/>
    <property type="project" value="RGD"/>
</dbReference>
<dbReference type="GO" id="GO:0097110">
    <property type="term" value="F:scaffold protein binding"/>
    <property type="evidence" value="ECO:0000353"/>
    <property type="project" value="BHF-UCL"/>
</dbReference>
<dbReference type="GO" id="GO:0009887">
    <property type="term" value="P:animal organ morphogenesis"/>
    <property type="evidence" value="ECO:0000266"/>
    <property type="project" value="RGD"/>
</dbReference>
<dbReference type="GO" id="GO:0006915">
    <property type="term" value="P:apoptotic process"/>
    <property type="evidence" value="ECO:0007669"/>
    <property type="project" value="UniProtKB-KW"/>
</dbReference>
<dbReference type="GO" id="GO:0019369">
    <property type="term" value="P:arachidonate metabolic process"/>
    <property type="evidence" value="ECO:0000270"/>
    <property type="project" value="RGD"/>
</dbReference>
<dbReference type="GO" id="GO:0060020">
    <property type="term" value="P:Bergmann glial cell differentiation"/>
    <property type="evidence" value="ECO:0000266"/>
    <property type="project" value="RGD"/>
</dbReference>
<dbReference type="GO" id="GO:0030509">
    <property type="term" value="P:BMP signaling pathway"/>
    <property type="evidence" value="ECO:0000266"/>
    <property type="project" value="RGD"/>
</dbReference>
<dbReference type="GO" id="GO:0061308">
    <property type="term" value="P:cardiac neural crest cell development involved in heart development"/>
    <property type="evidence" value="ECO:0000266"/>
    <property type="project" value="RGD"/>
</dbReference>
<dbReference type="GO" id="GO:0051216">
    <property type="term" value="P:cartilage development"/>
    <property type="evidence" value="ECO:0000266"/>
    <property type="project" value="RGD"/>
</dbReference>
<dbReference type="GO" id="GO:0072584">
    <property type="term" value="P:caveolin-mediated endocytosis"/>
    <property type="evidence" value="ECO:0000304"/>
    <property type="project" value="UniProtKB"/>
</dbReference>
<dbReference type="GO" id="GO:0007166">
    <property type="term" value="P:cell surface receptor signaling pathway"/>
    <property type="evidence" value="ECO:0000318"/>
    <property type="project" value="GO_Central"/>
</dbReference>
<dbReference type="GO" id="GO:0034198">
    <property type="term" value="P:cellular response to amino acid starvation"/>
    <property type="evidence" value="ECO:0000266"/>
    <property type="project" value="RGD"/>
</dbReference>
<dbReference type="GO" id="GO:0071260">
    <property type="term" value="P:cellular response to mechanical stimulus"/>
    <property type="evidence" value="ECO:0000266"/>
    <property type="project" value="RGD"/>
</dbReference>
<dbReference type="GO" id="GO:0097237">
    <property type="term" value="P:cellular response to toxic substance"/>
    <property type="evidence" value="ECO:0000314"/>
    <property type="project" value="RGD"/>
</dbReference>
<dbReference type="GO" id="GO:0071356">
    <property type="term" value="P:cellular response to tumor necrosis factor"/>
    <property type="evidence" value="ECO:0000266"/>
    <property type="project" value="RGD"/>
</dbReference>
<dbReference type="GO" id="GO:0046697">
    <property type="term" value="P:decidualization"/>
    <property type="evidence" value="ECO:0000314"/>
    <property type="project" value="RGD"/>
</dbReference>
<dbReference type="GO" id="GO:0006974">
    <property type="term" value="P:DNA damage response"/>
    <property type="evidence" value="ECO:0000266"/>
    <property type="project" value="RGD"/>
</dbReference>
<dbReference type="GO" id="GO:0006351">
    <property type="term" value="P:DNA-templated transcription"/>
    <property type="evidence" value="ECO:0000266"/>
    <property type="project" value="RGD"/>
</dbReference>
<dbReference type="GO" id="GO:0007173">
    <property type="term" value="P:epidermal growth factor receptor signaling pathway"/>
    <property type="evidence" value="ECO:0000266"/>
    <property type="project" value="RGD"/>
</dbReference>
<dbReference type="GO" id="GO:0038133">
    <property type="term" value="P:ERBB2-ERBB3 signaling pathway"/>
    <property type="evidence" value="ECO:0000266"/>
    <property type="project" value="RGD"/>
</dbReference>
<dbReference type="GO" id="GO:0070371">
    <property type="term" value="P:ERK1 and ERK2 cascade"/>
    <property type="evidence" value="ECO:0000266"/>
    <property type="project" value="RGD"/>
</dbReference>
<dbReference type="GO" id="GO:0060324">
    <property type="term" value="P:face development"/>
    <property type="evidence" value="ECO:0000266"/>
    <property type="project" value="RGD"/>
</dbReference>
<dbReference type="GO" id="GO:0008286">
    <property type="term" value="P:insulin receptor signaling pathway"/>
    <property type="evidence" value="ECO:0000266"/>
    <property type="project" value="RGD"/>
</dbReference>
<dbReference type="GO" id="GO:0048009">
    <property type="term" value="P:insulin-like growth factor receptor signaling pathway"/>
    <property type="evidence" value="ECO:0000266"/>
    <property type="project" value="RGD"/>
</dbReference>
<dbReference type="GO" id="GO:0070498">
    <property type="term" value="P:interleukin-1-mediated signaling pathway"/>
    <property type="evidence" value="ECO:0000266"/>
    <property type="project" value="RGD"/>
</dbReference>
<dbReference type="GO" id="GO:0035556">
    <property type="term" value="P:intracellular signal transduction"/>
    <property type="evidence" value="ECO:0000314"/>
    <property type="project" value="RGD"/>
</dbReference>
<dbReference type="GO" id="GO:0031663">
    <property type="term" value="P:lipopolysaccharide-mediated signaling pathway"/>
    <property type="evidence" value="ECO:0000266"/>
    <property type="project" value="RGD"/>
</dbReference>
<dbReference type="GO" id="GO:0060425">
    <property type="term" value="P:lung morphogenesis"/>
    <property type="evidence" value="ECO:0000266"/>
    <property type="project" value="RGD"/>
</dbReference>
<dbReference type="GO" id="GO:0000165">
    <property type="term" value="P:MAPK cascade"/>
    <property type="evidence" value="ECO:0000315"/>
    <property type="project" value="RGD"/>
</dbReference>
<dbReference type="GO" id="GO:0050804">
    <property type="term" value="P:modulation of chemical synaptic transmission"/>
    <property type="evidence" value="ECO:0000266"/>
    <property type="project" value="RGD"/>
</dbReference>
<dbReference type="GO" id="GO:0042552">
    <property type="term" value="P:myelination"/>
    <property type="evidence" value="ECO:0000266"/>
    <property type="project" value="RGD"/>
</dbReference>
<dbReference type="GO" id="GO:1904262">
    <property type="term" value="P:negative regulation of TORC1 signaling"/>
    <property type="evidence" value="ECO:0000266"/>
    <property type="project" value="RGD"/>
</dbReference>
<dbReference type="GO" id="GO:0014032">
    <property type="term" value="P:neural crest cell development"/>
    <property type="evidence" value="ECO:0000266"/>
    <property type="project" value="RGD"/>
</dbReference>
<dbReference type="GO" id="GO:0042473">
    <property type="term" value="P:outer ear morphogenesis"/>
    <property type="evidence" value="ECO:0000266"/>
    <property type="project" value="RGD"/>
</dbReference>
<dbReference type="GO" id="GO:0070374">
    <property type="term" value="P:positive regulation of ERK1 and ERK2 cascade"/>
    <property type="evidence" value="ECO:0000266"/>
    <property type="project" value="RGD"/>
</dbReference>
<dbReference type="GO" id="GO:0010759">
    <property type="term" value="P:positive regulation of macrophage chemotaxis"/>
    <property type="evidence" value="ECO:0000266"/>
    <property type="project" value="RGD"/>
</dbReference>
<dbReference type="GO" id="GO:0120041">
    <property type="term" value="P:positive regulation of macrophage proliferation"/>
    <property type="evidence" value="ECO:0000266"/>
    <property type="project" value="RGD"/>
</dbReference>
<dbReference type="GO" id="GO:0032206">
    <property type="term" value="P:positive regulation of telomere maintenance"/>
    <property type="evidence" value="ECO:0000266"/>
    <property type="project" value="RGD"/>
</dbReference>
<dbReference type="GO" id="GO:0045944">
    <property type="term" value="P:positive regulation of transcription by RNA polymerase II"/>
    <property type="evidence" value="ECO:0000266"/>
    <property type="project" value="RGD"/>
</dbReference>
<dbReference type="GO" id="GO:0045727">
    <property type="term" value="P:positive regulation of translation"/>
    <property type="evidence" value="ECO:0000315"/>
    <property type="project" value="RGD"/>
</dbReference>
<dbReference type="GO" id="GO:1904417">
    <property type="term" value="P:positive regulation of xenophagy"/>
    <property type="evidence" value="ECO:0000266"/>
    <property type="project" value="RGD"/>
</dbReference>
<dbReference type="GO" id="GO:0065003">
    <property type="term" value="P:protein-containing complex assembly"/>
    <property type="evidence" value="ECO:0000315"/>
    <property type="project" value="UniProtKB"/>
</dbReference>
<dbReference type="GO" id="GO:0030641">
    <property type="term" value="P:regulation of cellular pH"/>
    <property type="evidence" value="ECO:0000266"/>
    <property type="project" value="RGD"/>
</dbReference>
<dbReference type="GO" id="GO:0051493">
    <property type="term" value="P:regulation of cytoskeleton organization"/>
    <property type="evidence" value="ECO:0000304"/>
    <property type="project" value="UniProtKB"/>
</dbReference>
<dbReference type="GO" id="GO:2000641">
    <property type="term" value="P:regulation of early endosome to late endosome transport"/>
    <property type="evidence" value="ECO:0000304"/>
    <property type="project" value="UniProtKB"/>
</dbReference>
<dbReference type="GO" id="GO:0090170">
    <property type="term" value="P:regulation of Golgi inheritance"/>
    <property type="evidence" value="ECO:0000304"/>
    <property type="project" value="UniProtKB"/>
</dbReference>
<dbReference type="GO" id="GO:0030278">
    <property type="term" value="P:regulation of ossification"/>
    <property type="evidence" value="ECO:0000266"/>
    <property type="project" value="RGD"/>
</dbReference>
<dbReference type="GO" id="GO:0032872">
    <property type="term" value="P:regulation of stress-activated MAPK cascade"/>
    <property type="evidence" value="ECO:0000304"/>
    <property type="project" value="UniProtKB"/>
</dbReference>
<dbReference type="GO" id="GO:0070849">
    <property type="term" value="P:response to epidermal growth factor"/>
    <property type="evidence" value="ECO:0000250"/>
    <property type="project" value="UniProtKB"/>
</dbReference>
<dbReference type="GO" id="GO:0043330">
    <property type="term" value="P:response to exogenous dsRNA"/>
    <property type="evidence" value="ECO:0000266"/>
    <property type="project" value="RGD"/>
</dbReference>
<dbReference type="GO" id="GO:0032496">
    <property type="term" value="P:response to lipopolysaccharide"/>
    <property type="evidence" value="ECO:0000266"/>
    <property type="project" value="RGD"/>
</dbReference>
<dbReference type="GO" id="GO:0009636">
    <property type="term" value="P:response to toxic substance"/>
    <property type="evidence" value="ECO:0000314"/>
    <property type="project" value="RGD"/>
</dbReference>
<dbReference type="GO" id="GO:0014044">
    <property type="term" value="P:Schwann cell development"/>
    <property type="evidence" value="ECO:0000266"/>
    <property type="project" value="RGD"/>
</dbReference>
<dbReference type="GO" id="GO:0019233">
    <property type="term" value="P:sensory perception of pain"/>
    <property type="evidence" value="ECO:0000266"/>
    <property type="project" value="RGD"/>
</dbReference>
<dbReference type="GO" id="GO:0042770">
    <property type="term" value="P:signal transduction in response to DNA damage"/>
    <property type="evidence" value="ECO:0000266"/>
    <property type="project" value="RGD"/>
</dbReference>
<dbReference type="GO" id="GO:0051403">
    <property type="term" value="P:stress-activated MAPK cascade"/>
    <property type="evidence" value="ECO:0000266"/>
    <property type="project" value="RGD"/>
</dbReference>
<dbReference type="GO" id="GO:0048538">
    <property type="term" value="P:thymus development"/>
    <property type="evidence" value="ECO:0000266"/>
    <property type="project" value="RGD"/>
</dbReference>
<dbReference type="GO" id="GO:0030878">
    <property type="term" value="P:thyroid gland development"/>
    <property type="evidence" value="ECO:0000266"/>
    <property type="project" value="RGD"/>
</dbReference>
<dbReference type="GO" id="GO:0060440">
    <property type="term" value="P:trachea formation"/>
    <property type="evidence" value="ECO:0000266"/>
    <property type="project" value="RGD"/>
</dbReference>
<dbReference type="GO" id="GO:0098792">
    <property type="term" value="P:xenophagy"/>
    <property type="evidence" value="ECO:0000266"/>
    <property type="project" value="RGD"/>
</dbReference>
<dbReference type="CDD" id="cd07849">
    <property type="entry name" value="STKc_ERK1_2_like"/>
    <property type="match status" value="1"/>
</dbReference>
<dbReference type="FunFam" id="1.10.510.10:FF:000624">
    <property type="entry name" value="Mitogen-activated protein kinase"/>
    <property type="match status" value="1"/>
</dbReference>
<dbReference type="FunFam" id="3.30.200.20:FF:000585">
    <property type="entry name" value="Mitogen-activated protein kinase"/>
    <property type="match status" value="1"/>
</dbReference>
<dbReference type="FunFam" id="3.30.200.20:FF:001116">
    <property type="entry name" value="Mitogen-activated protein kinase 3"/>
    <property type="match status" value="1"/>
</dbReference>
<dbReference type="Gene3D" id="3.30.200.20">
    <property type="entry name" value="Phosphorylase Kinase, domain 1"/>
    <property type="match status" value="1"/>
</dbReference>
<dbReference type="Gene3D" id="1.10.510.10">
    <property type="entry name" value="Transferase(Phosphotransferase) domain 1"/>
    <property type="match status" value="1"/>
</dbReference>
<dbReference type="InterPro" id="IPR011009">
    <property type="entry name" value="Kinase-like_dom_sf"/>
</dbReference>
<dbReference type="InterPro" id="IPR050117">
    <property type="entry name" value="MAP_kinase"/>
</dbReference>
<dbReference type="InterPro" id="IPR003527">
    <property type="entry name" value="MAP_kinase_CS"/>
</dbReference>
<dbReference type="InterPro" id="IPR008349">
    <property type="entry name" value="MAPK_ERK1/2"/>
</dbReference>
<dbReference type="InterPro" id="IPR000719">
    <property type="entry name" value="Prot_kinase_dom"/>
</dbReference>
<dbReference type="InterPro" id="IPR017441">
    <property type="entry name" value="Protein_kinase_ATP_BS"/>
</dbReference>
<dbReference type="InterPro" id="IPR008271">
    <property type="entry name" value="Ser/Thr_kinase_AS"/>
</dbReference>
<dbReference type="PANTHER" id="PTHR24055">
    <property type="entry name" value="MITOGEN-ACTIVATED PROTEIN KINASE"/>
    <property type="match status" value="1"/>
</dbReference>
<dbReference type="Pfam" id="PF00069">
    <property type="entry name" value="Pkinase"/>
    <property type="match status" value="1"/>
</dbReference>
<dbReference type="PRINTS" id="PR01770">
    <property type="entry name" value="ERK1ERK2MAPK"/>
</dbReference>
<dbReference type="SMART" id="SM00220">
    <property type="entry name" value="S_TKc"/>
    <property type="match status" value="1"/>
</dbReference>
<dbReference type="SUPFAM" id="SSF56112">
    <property type="entry name" value="Protein kinase-like (PK-like)"/>
    <property type="match status" value="1"/>
</dbReference>
<dbReference type="PROSITE" id="PS01351">
    <property type="entry name" value="MAPK"/>
    <property type="match status" value="1"/>
</dbReference>
<dbReference type="PROSITE" id="PS00107">
    <property type="entry name" value="PROTEIN_KINASE_ATP"/>
    <property type="match status" value="1"/>
</dbReference>
<dbReference type="PROSITE" id="PS50011">
    <property type="entry name" value="PROTEIN_KINASE_DOM"/>
    <property type="match status" value="1"/>
</dbReference>
<dbReference type="PROSITE" id="PS00108">
    <property type="entry name" value="PROTEIN_KINASE_ST"/>
    <property type="match status" value="1"/>
</dbReference>
<proteinExistence type="evidence at protein level"/>
<comment type="function">
    <text>Serine/threonine kinase which acts as an essential component of the MAP kinase signal transduction pathway. MAPK1/ERK2 and MAPK3/ERK1 are the 2 MAPKs which play an important role in the MAPK/ERK cascade. They participate also in a signaling cascade initiated by activated KIT and KITLG/SCF. Depending on the cellular context, the MAPK/ERK cascade mediates diverse biological functions such as cell growth, adhesion, survival and differentiation through the regulation of transcription, translation, cytoskeletal rearrangements. The MAPK/ERK cascade also plays a role in initiation and regulation of meiosis, mitosis, and postmitotic functions in differentiated cells by phosphorylating a number of transcription factors. About 160 substrates have already been discovered for ERKs. Many of these substrates are localized in the nucleus, and seem to participate in the regulation of transcription upon stimulation. However, other substrates are found in the cytosol as well as in other cellular organelles, and those are responsible for processes such as translation, mitosis and apoptosis. Moreover, the MAPK/ERK cascade is also involved in the regulation of the endosomal dynamics, including lysosome processing and endosome cycling through the perinuclear recycling compartment (PNRC); as well as in the fragmentation of the Golgi apparatus during mitosis. The substrates include transcription factors (such as ATF2, BCL6, ELK1, ERF, FOS, HSF4 or SPZ1), cytoskeletal elements (such as CANX, CTTN, GJA1, MAP2, MAPT, PXN, SORBS3 or STMN1), regulators of apoptosis (such as BAD, BTG2, CASP9, DAPK1, IER3, MCL1 or PPARG), regulators of translation (such as EIF4EBP1) and a variety of other signaling-related molecules (like ARHGEF2, DEPTOR, FRS2 or GRB10). Protein kinases (such as RAF1, RPS6KA1/RSK1, RPS6KA3/RSK2, RPS6KA2/RSK3, RPS6KA6/RSK4, SYK, MKNK1/MNK1, MKNK2/MNK2, RPS6KA5/MSK1, RPS6KA4/MSK2, MAPKAPK3 or MAPKAPK5) and phosphatases (such as DUSP1, DUSP4, DUSP6 or DUSP16) are other substrates which enable the propagation the MAPK/ERK signal to additional cytosolic and nuclear targets, thereby extending the specificity of the cascade.</text>
</comment>
<comment type="catalytic activity">
    <reaction>
        <text>L-seryl-[protein] + ATP = O-phospho-L-seryl-[protein] + ADP + H(+)</text>
        <dbReference type="Rhea" id="RHEA:17989"/>
        <dbReference type="Rhea" id="RHEA-COMP:9863"/>
        <dbReference type="Rhea" id="RHEA-COMP:11604"/>
        <dbReference type="ChEBI" id="CHEBI:15378"/>
        <dbReference type="ChEBI" id="CHEBI:29999"/>
        <dbReference type="ChEBI" id="CHEBI:30616"/>
        <dbReference type="ChEBI" id="CHEBI:83421"/>
        <dbReference type="ChEBI" id="CHEBI:456216"/>
        <dbReference type="EC" id="2.7.11.24"/>
    </reaction>
</comment>
<comment type="catalytic activity">
    <reaction>
        <text>L-threonyl-[protein] + ATP = O-phospho-L-threonyl-[protein] + ADP + H(+)</text>
        <dbReference type="Rhea" id="RHEA:46608"/>
        <dbReference type="Rhea" id="RHEA-COMP:11060"/>
        <dbReference type="Rhea" id="RHEA-COMP:11605"/>
        <dbReference type="ChEBI" id="CHEBI:15378"/>
        <dbReference type="ChEBI" id="CHEBI:30013"/>
        <dbReference type="ChEBI" id="CHEBI:30616"/>
        <dbReference type="ChEBI" id="CHEBI:61977"/>
        <dbReference type="ChEBI" id="CHEBI:456216"/>
        <dbReference type="EC" id="2.7.11.24"/>
    </reaction>
</comment>
<comment type="cofactor">
    <cofactor evidence="1">
        <name>Mg(2+)</name>
        <dbReference type="ChEBI" id="CHEBI:18420"/>
    </cofactor>
</comment>
<comment type="activity regulation">
    <text>Phosphorylated by MAP2K1/MEK1 and MAP2K2/MEK2 on Thr-203 and Tyr-205 in response to external stimuli like insulin or NGF. Both phosphorylations are required for activity. This phosphorylation causes dramatic conformational changes, which enable full activation and interaction of MAPK1/ERK2 with its substrates. Dephosphorylated and inactivated by DUSP3, DUSP6 and DUSP9.</text>
</comment>
<comment type="subunit">
    <text evidence="2 3 6 8">Binds both upstream activators and downstream substrates in multimolecular complexes. Found in a complex with at least BRAF, HRAS, MAP2K1/MEK1, MAPK3 and RGS14. Interacts with ADAM15, ARRB2, CANX, DAPK1 (via death domain), HSF4, IER3, MAP2K1/MEK1, MORG1, NISCH, PEA15, SGK1 and MKNK2. MKNK2 isoform 1 binding prevents from dephosphorylation and inactivation. Interacts with TPR. Interacts with HSF1 (via D domain and preferentially with hyperphosphorylated form); this interaction occurs upon heat shock. Interacts with CDKN2AIP (By similarity). Interacts with CAVIN4 (PubMed:24567387). Interacts with GIT1; this interaction is necessary for MAPK3 localization to focal adhesions (PubMed:15923189). Interacts with ZNF263 (By similarity). Interacts with EBF4.</text>
</comment>
<comment type="subcellular location">
    <subcellularLocation>
        <location evidence="8">Cytoplasm</location>
    </subcellularLocation>
    <subcellularLocation>
        <location>Nucleus</location>
    </subcellularLocation>
    <subcellularLocation>
        <location evidence="8">Membrane</location>
        <location evidence="8">Caveola</location>
    </subcellularLocation>
    <subcellularLocation>
        <location evidence="3">Cell junction</location>
        <location evidence="3">Focal adhesion</location>
    </subcellularLocation>
    <text evidence="2 3">Autophosphorylation at Thr-207 promotes nuclear localization (By similarity). PEA15-binding redirects the biological outcome of MAPK3 kinase-signaling by sequestering MAPK3 into the cytoplasm (By similarity).</text>
</comment>
<comment type="alternative products">
    <event type="alternative splicing"/>
    <isoform>
        <id>P21708-1</id>
        <name>1</name>
        <name>A</name>
        <sequence type="displayed"/>
    </isoform>
    <isoform>
        <id>P21708-2</id>
        <name>2</name>
        <name>B</name>
        <sequence type="described" ref="VSP_004830"/>
    </isoform>
</comment>
<comment type="tissue specificity">
    <text evidence="7">Highest levels within the nervous system, expressed in different tissues, mostly in intestine, placenta and lung.</text>
</comment>
<comment type="developmental stage">
    <text>Increased expression during development.</text>
</comment>
<comment type="domain">
    <text>The TXY motif contains the threonine and tyrosine residues whose phosphorylation activates the MAP kinases.</text>
</comment>
<comment type="PTM">
    <text evidence="1 9 10">Phosphorylated upon FLT3 and KIT signaling. Ligand-activated ALK induces tyrosine phosphorylation (By similarity). Dephosphorylated by PTPRJ at Tyr-205 (By similarity). Dually phosphorylated on Thr-203 and Tyr-205, which activates the enzyme.</text>
</comment>
<comment type="PTM">
    <text evidence="2">Ubiquitinated by TRIM15 via 'Lys-63'-linked ubiquitination; leading to activation. Deubiquitinated by CYLD.</text>
</comment>
<comment type="similarity">
    <text evidence="11">Belongs to the protein kinase superfamily. CMGC Ser/Thr protein kinase family. MAP kinase subfamily.</text>
</comment>
<comment type="caution">
    <text evidence="12 13">The publication has been retracted as they falsified western blot data.</text>
</comment>
<name>MK03_RAT</name>
<protein>
    <recommendedName>
        <fullName>Mitogen-activated protein kinase 3</fullName>
        <shortName>MAP kinase 3</shortName>
        <shortName>MAPK 3</shortName>
        <ecNumber>2.7.11.24</ecNumber>
    </recommendedName>
    <alternativeName>
        <fullName>ERT2</fullName>
    </alternativeName>
    <alternativeName>
        <fullName>Extracellular signal-regulated kinase 1</fullName>
        <shortName>ERK-1</shortName>
    </alternativeName>
    <alternativeName>
        <fullName>Insulin-stimulated MAP2 kinase</fullName>
    </alternativeName>
    <alternativeName>
        <fullName>MAP kinase isoform p44</fullName>
        <shortName>p44-MAPK</shortName>
    </alternativeName>
    <alternativeName>
        <fullName>MNK1</fullName>
    </alternativeName>
    <alternativeName>
        <fullName>Microtubule-associated protein 2 kinase</fullName>
    </alternativeName>
    <alternativeName>
        <fullName>p44-ERK1</fullName>
    </alternativeName>
</protein>
<evidence type="ECO:0000250" key="1"/>
<evidence type="ECO:0000250" key="2">
    <source>
        <dbReference type="UniProtKB" id="P27361"/>
    </source>
</evidence>
<evidence type="ECO:0000250" key="3">
    <source>
        <dbReference type="UniProtKB" id="Q63844"/>
    </source>
</evidence>
<evidence type="ECO:0000255" key="4">
    <source>
        <dbReference type="PROSITE-ProRule" id="PRU00159"/>
    </source>
</evidence>
<evidence type="ECO:0000255" key="5">
    <source>
        <dbReference type="PROSITE-ProRule" id="PRU10027"/>
    </source>
</evidence>
<evidence type="ECO:0000269" key="6">
    <source>
    </source>
</evidence>
<evidence type="ECO:0000269" key="7">
    <source>
    </source>
</evidence>
<evidence type="ECO:0000269" key="8">
    <source>
    </source>
</evidence>
<evidence type="ECO:0000269" key="9">
    <source>
    </source>
</evidence>
<evidence type="ECO:0000269" key="10">
    <source ref="2"/>
</evidence>
<evidence type="ECO:0000305" key="11"/>
<evidence type="ECO:0000305" key="12">
    <source>
    </source>
</evidence>
<evidence type="ECO:0000305" key="13">
    <source>
    </source>
</evidence>
<evidence type="ECO:0007744" key="14">
    <source>
    </source>
</evidence>
<evidence type="ECO:0007744" key="15">
    <source>
    </source>
</evidence>